<comment type="function">
    <text evidence="1">Catalyzes the attachment of serine to tRNA(Ser). Is also able to aminoacylate tRNA(Sec) with serine, to form the misacylated tRNA L-seryl-tRNA(Sec), which will be further converted into selenocysteinyl-tRNA(Sec).</text>
</comment>
<comment type="catalytic activity">
    <reaction evidence="1">
        <text>tRNA(Ser) + L-serine + ATP = L-seryl-tRNA(Ser) + AMP + diphosphate + H(+)</text>
        <dbReference type="Rhea" id="RHEA:12292"/>
        <dbReference type="Rhea" id="RHEA-COMP:9669"/>
        <dbReference type="Rhea" id="RHEA-COMP:9703"/>
        <dbReference type="ChEBI" id="CHEBI:15378"/>
        <dbReference type="ChEBI" id="CHEBI:30616"/>
        <dbReference type="ChEBI" id="CHEBI:33019"/>
        <dbReference type="ChEBI" id="CHEBI:33384"/>
        <dbReference type="ChEBI" id="CHEBI:78442"/>
        <dbReference type="ChEBI" id="CHEBI:78533"/>
        <dbReference type="ChEBI" id="CHEBI:456215"/>
        <dbReference type="EC" id="6.1.1.11"/>
    </reaction>
</comment>
<comment type="catalytic activity">
    <reaction evidence="1">
        <text>tRNA(Sec) + L-serine + ATP = L-seryl-tRNA(Sec) + AMP + diphosphate + H(+)</text>
        <dbReference type="Rhea" id="RHEA:42580"/>
        <dbReference type="Rhea" id="RHEA-COMP:9742"/>
        <dbReference type="Rhea" id="RHEA-COMP:10128"/>
        <dbReference type="ChEBI" id="CHEBI:15378"/>
        <dbReference type="ChEBI" id="CHEBI:30616"/>
        <dbReference type="ChEBI" id="CHEBI:33019"/>
        <dbReference type="ChEBI" id="CHEBI:33384"/>
        <dbReference type="ChEBI" id="CHEBI:78442"/>
        <dbReference type="ChEBI" id="CHEBI:78533"/>
        <dbReference type="ChEBI" id="CHEBI:456215"/>
        <dbReference type="EC" id="6.1.1.11"/>
    </reaction>
</comment>
<comment type="pathway">
    <text evidence="1">Aminoacyl-tRNA biosynthesis; selenocysteinyl-tRNA(Sec) biosynthesis; L-seryl-tRNA(Sec) from L-serine and tRNA(Sec): step 1/1.</text>
</comment>
<comment type="subunit">
    <text evidence="1">Homodimer. The tRNA molecule binds across the dimer.</text>
</comment>
<comment type="subcellular location">
    <subcellularLocation>
        <location evidence="1">Cytoplasm</location>
    </subcellularLocation>
</comment>
<comment type="domain">
    <text evidence="1">Consists of two distinct domains, a catalytic core and a N-terminal extension that is involved in tRNA binding.</text>
</comment>
<comment type="similarity">
    <text evidence="1">Belongs to the class-II aminoacyl-tRNA synthetase family. Type-1 seryl-tRNA synthetase subfamily.</text>
</comment>
<reference key="1">
    <citation type="submission" date="2008-08" db="EMBL/GenBank/DDBJ databases">
        <title>Complete sequence of Anaeromyxobacter sp. K.</title>
        <authorList>
            <consortium name="US DOE Joint Genome Institute"/>
            <person name="Lucas S."/>
            <person name="Copeland A."/>
            <person name="Lapidus A."/>
            <person name="Glavina del Rio T."/>
            <person name="Dalin E."/>
            <person name="Tice H."/>
            <person name="Bruce D."/>
            <person name="Goodwin L."/>
            <person name="Pitluck S."/>
            <person name="Saunders E."/>
            <person name="Brettin T."/>
            <person name="Detter J.C."/>
            <person name="Han C."/>
            <person name="Larimer F."/>
            <person name="Land M."/>
            <person name="Hauser L."/>
            <person name="Kyrpides N."/>
            <person name="Ovchinnikiva G."/>
            <person name="Beliaev A."/>
        </authorList>
    </citation>
    <scope>NUCLEOTIDE SEQUENCE [LARGE SCALE GENOMIC DNA]</scope>
    <source>
        <strain>K</strain>
    </source>
</reference>
<sequence length="435" mass="48218">MLDLKAVAADFESFERRLARRGEGAVQALAPVKPLAARRRELNVLLEKQKKEQAEANANIRQLARTDKDAVEGARASLRALGDEVKKTEAALGDVEAELTRLLMVVPNPPSDSVPDGKDEHDNVVVRTWGEQKAYGFTPKPHWELGEALGVLEWQQAAKLSGSRFTILKGAAARLERAIVSFFIDVHTSRGYTEILPPYLVTGETMTGTGQLPKFEEDLFKTTNEPPMYLIPTAEVPVTNMHRDEIFEASAMPVSYCAFSPCFRAEAGSAGRDTRGIMRQHQFHKVELVKLSKAEESEAEHEKMLDDACEVLRRLGLHFRVVLLCAGDMGFSSAKTYDIEVWCPGQGAYREISSVSNCEDFQARRIRVRYRGENGKPRLAHTLNGSGVAVGRTIVAILEQCQEADGTVVIPEPLRPYMGGLERIAAETFPRGVER</sequence>
<protein>
    <recommendedName>
        <fullName evidence="1">Serine--tRNA ligase</fullName>
        <ecNumber evidence="1">6.1.1.11</ecNumber>
    </recommendedName>
    <alternativeName>
        <fullName evidence="1">Seryl-tRNA synthetase</fullName>
        <shortName evidence="1">SerRS</shortName>
    </alternativeName>
    <alternativeName>
        <fullName evidence="1">Seryl-tRNA(Ser/Sec) synthetase</fullName>
    </alternativeName>
</protein>
<dbReference type="EC" id="6.1.1.11" evidence="1"/>
<dbReference type="EMBL" id="CP001131">
    <property type="protein sequence ID" value="ACG75125.1"/>
    <property type="molecule type" value="Genomic_DNA"/>
</dbReference>
<dbReference type="RefSeq" id="WP_012527885.1">
    <property type="nucleotide sequence ID" value="NC_011145.1"/>
</dbReference>
<dbReference type="SMR" id="B4UFJ8"/>
<dbReference type="KEGG" id="ank:AnaeK_3916"/>
<dbReference type="HOGENOM" id="CLU_023797_1_1_7"/>
<dbReference type="OrthoDB" id="9804647at2"/>
<dbReference type="UniPathway" id="UPA00906">
    <property type="reaction ID" value="UER00895"/>
</dbReference>
<dbReference type="Proteomes" id="UP000001871">
    <property type="component" value="Chromosome"/>
</dbReference>
<dbReference type="GO" id="GO:0005737">
    <property type="term" value="C:cytoplasm"/>
    <property type="evidence" value="ECO:0007669"/>
    <property type="project" value="UniProtKB-SubCell"/>
</dbReference>
<dbReference type="GO" id="GO:0005524">
    <property type="term" value="F:ATP binding"/>
    <property type="evidence" value="ECO:0007669"/>
    <property type="project" value="UniProtKB-UniRule"/>
</dbReference>
<dbReference type="GO" id="GO:0004828">
    <property type="term" value="F:serine-tRNA ligase activity"/>
    <property type="evidence" value="ECO:0007669"/>
    <property type="project" value="UniProtKB-UniRule"/>
</dbReference>
<dbReference type="GO" id="GO:0016260">
    <property type="term" value="P:selenocysteine biosynthetic process"/>
    <property type="evidence" value="ECO:0007669"/>
    <property type="project" value="UniProtKB-UniRule"/>
</dbReference>
<dbReference type="GO" id="GO:0006434">
    <property type="term" value="P:seryl-tRNA aminoacylation"/>
    <property type="evidence" value="ECO:0007669"/>
    <property type="project" value="UniProtKB-UniRule"/>
</dbReference>
<dbReference type="CDD" id="cd00770">
    <property type="entry name" value="SerRS_core"/>
    <property type="match status" value="1"/>
</dbReference>
<dbReference type="Gene3D" id="3.30.930.10">
    <property type="entry name" value="Bira Bifunctional Protein, Domain 2"/>
    <property type="match status" value="1"/>
</dbReference>
<dbReference type="Gene3D" id="1.10.287.40">
    <property type="entry name" value="Serine-tRNA synthetase, tRNA binding domain"/>
    <property type="match status" value="1"/>
</dbReference>
<dbReference type="HAMAP" id="MF_00176">
    <property type="entry name" value="Ser_tRNA_synth_type1"/>
    <property type="match status" value="1"/>
</dbReference>
<dbReference type="InterPro" id="IPR002314">
    <property type="entry name" value="aa-tRNA-synt_IIb"/>
</dbReference>
<dbReference type="InterPro" id="IPR006195">
    <property type="entry name" value="aa-tRNA-synth_II"/>
</dbReference>
<dbReference type="InterPro" id="IPR045864">
    <property type="entry name" value="aa-tRNA-synth_II/BPL/LPL"/>
</dbReference>
<dbReference type="InterPro" id="IPR002317">
    <property type="entry name" value="Ser-tRNA-ligase_type_1"/>
</dbReference>
<dbReference type="InterPro" id="IPR015866">
    <property type="entry name" value="Ser-tRNA-synth_1_N"/>
</dbReference>
<dbReference type="InterPro" id="IPR042103">
    <property type="entry name" value="SerRS_1_N_sf"/>
</dbReference>
<dbReference type="InterPro" id="IPR033729">
    <property type="entry name" value="SerRS_core"/>
</dbReference>
<dbReference type="InterPro" id="IPR010978">
    <property type="entry name" value="tRNA-bd_arm"/>
</dbReference>
<dbReference type="NCBIfam" id="TIGR00414">
    <property type="entry name" value="serS"/>
    <property type="match status" value="1"/>
</dbReference>
<dbReference type="PANTHER" id="PTHR43697:SF1">
    <property type="entry name" value="SERINE--TRNA LIGASE"/>
    <property type="match status" value="1"/>
</dbReference>
<dbReference type="PANTHER" id="PTHR43697">
    <property type="entry name" value="SERYL-TRNA SYNTHETASE"/>
    <property type="match status" value="1"/>
</dbReference>
<dbReference type="Pfam" id="PF02403">
    <property type="entry name" value="Seryl_tRNA_N"/>
    <property type="match status" value="1"/>
</dbReference>
<dbReference type="Pfam" id="PF00587">
    <property type="entry name" value="tRNA-synt_2b"/>
    <property type="match status" value="1"/>
</dbReference>
<dbReference type="PIRSF" id="PIRSF001529">
    <property type="entry name" value="Ser-tRNA-synth_IIa"/>
    <property type="match status" value="1"/>
</dbReference>
<dbReference type="PRINTS" id="PR00981">
    <property type="entry name" value="TRNASYNTHSER"/>
</dbReference>
<dbReference type="SUPFAM" id="SSF55681">
    <property type="entry name" value="Class II aaRS and biotin synthetases"/>
    <property type="match status" value="1"/>
</dbReference>
<dbReference type="SUPFAM" id="SSF46589">
    <property type="entry name" value="tRNA-binding arm"/>
    <property type="match status" value="1"/>
</dbReference>
<dbReference type="PROSITE" id="PS50862">
    <property type="entry name" value="AA_TRNA_LIGASE_II"/>
    <property type="match status" value="1"/>
</dbReference>
<accession>B4UFJ8</accession>
<feature type="chain" id="PRO_1000098031" description="Serine--tRNA ligase">
    <location>
        <begin position="1"/>
        <end position="435"/>
    </location>
</feature>
<feature type="binding site" evidence="1">
    <location>
        <begin position="233"/>
        <end position="235"/>
    </location>
    <ligand>
        <name>L-serine</name>
        <dbReference type="ChEBI" id="CHEBI:33384"/>
    </ligand>
</feature>
<feature type="binding site" evidence="1">
    <location>
        <begin position="264"/>
        <end position="266"/>
    </location>
    <ligand>
        <name>ATP</name>
        <dbReference type="ChEBI" id="CHEBI:30616"/>
    </ligand>
</feature>
<feature type="binding site" evidence="1">
    <location>
        <position position="287"/>
    </location>
    <ligand>
        <name>L-serine</name>
        <dbReference type="ChEBI" id="CHEBI:33384"/>
    </ligand>
</feature>
<feature type="binding site" evidence="1">
    <location>
        <begin position="351"/>
        <end position="354"/>
    </location>
    <ligand>
        <name>ATP</name>
        <dbReference type="ChEBI" id="CHEBI:30616"/>
    </ligand>
</feature>
<feature type="binding site" evidence="1">
    <location>
        <position position="386"/>
    </location>
    <ligand>
        <name>L-serine</name>
        <dbReference type="ChEBI" id="CHEBI:33384"/>
    </ligand>
</feature>
<organism>
    <name type="scientific">Anaeromyxobacter sp. (strain K)</name>
    <dbReference type="NCBI Taxonomy" id="447217"/>
    <lineage>
        <taxon>Bacteria</taxon>
        <taxon>Pseudomonadati</taxon>
        <taxon>Myxococcota</taxon>
        <taxon>Myxococcia</taxon>
        <taxon>Myxococcales</taxon>
        <taxon>Cystobacterineae</taxon>
        <taxon>Anaeromyxobacteraceae</taxon>
        <taxon>Anaeromyxobacter</taxon>
    </lineage>
</organism>
<gene>
    <name evidence="1" type="primary">serS</name>
    <name type="ordered locus">AnaeK_3916</name>
</gene>
<name>SYS_ANASK</name>
<proteinExistence type="inferred from homology"/>
<keyword id="KW-0030">Aminoacyl-tRNA synthetase</keyword>
<keyword id="KW-0067">ATP-binding</keyword>
<keyword id="KW-0963">Cytoplasm</keyword>
<keyword id="KW-0436">Ligase</keyword>
<keyword id="KW-0547">Nucleotide-binding</keyword>
<keyword id="KW-0648">Protein biosynthesis</keyword>
<evidence type="ECO:0000255" key="1">
    <source>
        <dbReference type="HAMAP-Rule" id="MF_00176"/>
    </source>
</evidence>